<sequence>MNIEWFAIGVGAIVVLYILYHFIKMIWSILGLYVFYQPIDLKKKAGASWAVITGGTDGIGKSFSFELAKRGFNIYIVSRTQSKLEQTKKEIMEKYSNVEVRFATFDFTNPSISDYKKLLSQLNEVSIGMLINNVGMLFEYPENLHKTVGGIDVVANVTILNTLPVTLLSAGILPQMVSRKTGIIVNIGSVAGAAKMAEWSVYSASKKYVEWLTGCLRKEYEHQGIIIQAITPALVATKLSGHTETSLFCPDSATFAKSALNTVGHTSQTTGYINHQIQCEMLALFPECFLDSFVKKSSVETREKALAKKENKHLL</sequence>
<accession>Q17704</accession>
<organism>
    <name type="scientific">Caenorhabditis elegans</name>
    <dbReference type="NCBI Taxonomy" id="6239"/>
    <lineage>
        <taxon>Eukaryota</taxon>
        <taxon>Metazoa</taxon>
        <taxon>Ecdysozoa</taxon>
        <taxon>Nematoda</taxon>
        <taxon>Chromadorea</taxon>
        <taxon>Rhabditida</taxon>
        <taxon>Rhabditina</taxon>
        <taxon>Rhabditomorpha</taxon>
        <taxon>Rhabditoidea</taxon>
        <taxon>Rhabditidae</taxon>
        <taxon>Peloderinae</taxon>
        <taxon>Caenorhabditis</taxon>
    </lineage>
</organism>
<dbReference type="EC" id="1.1.1.-"/>
<dbReference type="EMBL" id="Z77652">
    <property type="protein sequence ID" value="CAB01115.2"/>
    <property type="molecule type" value="Genomic_DNA"/>
</dbReference>
<dbReference type="PIR" id="T18981">
    <property type="entry name" value="T18981"/>
</dbReference>
<dbReference type="RefSeq" id="NP_506448.2">
    <property type="nucleotide sequence ID" value="NM_074047.4"/>
</dbReference>
<dbReference type="SMR" id="Q17704"/>
<dbReference type="FunCoup" id="Q17704">
    <property type="interactions" value="2480"/>
</dbReference>
<dbReference type="STRING" id="6239.C06B3.5.1"/>
<dbReference type="PaxDb" id="6239-C06B3.5"/>
<dbReference type="EnsemblMetazoa" id="C06B3.5.1">
    <property type="protein sequence ID" value="C06B3.5.1"/>
    <property type="gene ID" value="WBGene00007364"/>
</dbReference>
<dbReference type="GeneID" id="182292"/>
<dbReference type="KEGG" id="cel:CELE_C06B3.5"/>
<dbReference type="AGR" id="WB:WBGene00007364"/>
<dbReference type="CTD" id="182292"/>
<dbReference type="WormBase" id="C06B3.5">
    <property type="protein sequence ID" value="CE43017"/>
    <property type="gene ID" value="WBGene00007364"/>
    <property type="gene designation" value="stdh-3"/>
</dbReference>
<dbReference type="eggNOG" id="KOG1014">
    <property type="taxonomic scope" value="Eukaryota"/>
</dbReference>
<dbReference type="GeneTree" id="ENSGT00940000165708"/>
<dbReference type="HOGENOM" id="CLU_010194_38_3_1"/>
<dbReference type="InParanoid" id="Q17704"/>
<dbReference type="OMA" id="KYVGRTN"/>
<dbReference type="OrthoDB" id="5545019at2759"/>
<dbReference type="PhylomeDB" id="Q17704"/>
<dbReference type="PRO" id="PR:Q17704"/>
<dbReference type="Proteomes" id="UP000001940">
    <property type="component" value="Chromosome V"/>
</dbReference>
<dbReference type="GO" id="GO:0005783">
    <property type="term" value="C:endoplasmic reticulum"/>
    <property type="evidence" value="ECO:0000318"/>
    <property type="project" value="GO_Central"/>
</dbReference>
<dbReference type="GO" id="GO:0016491">
    <property type="term" value="F:oxidoreductase activity"/>
    <property type="evidence" value="ECO:0007669"/>
    <property type="project" value="UniProtKB-KW"/>
</dbReference>
<dbReference type="GO" id="GO:0030497">
    <property type="term" value="P:fatty acid elongation"/>
    <property type="evidence" value="ECO:0000318"/>
    <property type="project" value="GO_Central"/>
</dbReference>
<dbReference type="GO" id="GO:0006694">
    <property type="term" value="P:steroid biosynthetic process"/>
    <property type="evidence" value="ECO:0007669"/>
    <property type="project" value="UniProtKB-KW"/>
</dbReference>
<dbReference type="CDD" id="cd05356">
    <property type="entry name" value="17beta-HSD1_like_SDR_c"/>
    <property type="match status" value="1"/>
</dbReference>
<dbReference type="FunFam" id="3.40.50.720:FF:000467">
    <property type="entry name" value="Steroid dehydrogenase 4"/>
    <property type="match status" value="1"/>
</dbReference>
<dbReference type="Gene3D" id="3.40.50.720">
    <property type="entry name" value="NAD(P)-binding Rossmann-like Domain"/>
    <property type="match status" value="1"/>
</dbReference>
<dbReference type="InterPro" id="IPR036291">
    <property type="entry name" value="NAD(P)-bd_dom_sf"/>
</dbReference>
<dbReference type="InterPro" id="IPR020904">
    <property type="entry name" value="Sc_DH/Rdtase_CS"/>
</dbReference>
<dbReference type="InterPro" id="IPR002347">
    <property type="entry name" value="SDR_fam"/>
</dbReference>
<dbReference type="PANTHER" id="PTHR43086:SF1">
    <property type="entry name" value="STEROID DEHYDROGENASE 1-RELATED"/>
    <property type="match status" value="1"/>
</dbReference>
<dbReference type="PANTHER" id="PTHR43086">
    <property type="entry name" value="VERY-LONG-CHAIN 3-OXOOACYL-COA REDUCTASE"/>
    <property type="match status" value="1"/>
</dbReference>
<dbReference type="Pfam" id="PF00106">
    <property type="entry name" value="adh_short"/>
    <property type="match status" value="1"/>
</dbReference>
<dbReference type="PIRSF" id="PIRSF000126">
    <property type="entry name" value="11-beta-HSD1"/>
    <property type="match status" value="1"/>
</dbReference>
<dbReference type="PRINTS" id="PR00081">
    <property type="entry name" value="GDHRDH"/>
</dbReference>
<dbReference type="PRINTS" id="PR00080">
    <property type="entry name" value="SDRFAMILY"/>
</dbReference>
<dbReference type="SUPFAM" id="SSF51735">
    <property type="entry name" value="NAD(P)-binding Rossmann-fold domains"/>
    <property type="match status" value="1"/>
</dbReference>
<dbReference type="PROSITE" id="PS00061">
    <property type="entry name" value="ADH_SHORT"/>
    <property type="match status" value="1"/>
</dbReference>
<protein>
    <recommendedName>
        <fullName>Putative steroid dehydrogenase 3</fullName>
        <ecNumber>1.1.1.-</ecNumber>
    </recommendedName>
</protein>
<evidence type="ECO:0000250" key="1"/>
<evidence type="ECO:0000305" key="2"/>
<name>STDH3_CAEEL</name>
<proteinExistence type="inferred from homology"/>
<comment type="similarity">
    <text evidence="2">Belongs to the short-chain dehydrogenases/reductases (SDR) family. 17-beta-HSD 3 subfamily.</text>
</comment>
<feature type="chain" id="PRO_0000054580" description="Putative steroid dehydrogenase 3">
    <location>
        <begin position="1"/>
        <end position="315"/>
    </location>
</feature>
<feature type="active site" evidence="1">
    <location>
        <position position="202"/>
    </location>
</feature>
<feature type="binding site" evidence="1">
    <location>
        <begin position="47"/>
        <end position="76"/>
    </location>
    <ligand>
        <name>NADP(+)</name>
        <dbReference type="ChEBI" id="CHEBI:58349"/>
    </ligand>
</feature>
<gene>
    <name type="primary">stdh-3</name>
    <name type="ORF">C06B3.5</name>
</gene>
<keyword id="KW-0444">Lipid biosynthesis</keyword>
<keyword id="KW-0443">Lipid metabolism</keyword>
<keyword id="KW-0521">NADP</keyword>
<keyword id="KW-0560">Oxidoreductase</keyword>
<keyword id="KW-1185">Reference proteome</keyword>
<keyword id="KW-0752">Steroid biosynthesis</keyword>
<reference key="1">
    <citation type="journal article" date="1998" name="Science">
        <title>Genome sequence of the nematode C. elegans: a platform for investigating biology.</title>
        <authorList>
            <consortium name="The C. elegans sequencing consortium"/>
        </authorList>
    </citation>
    <scope>NUCLEOTIDE SEQUENCE [LARGE SCALE GENOMIC DNA]</scope>
    <source>
        <strain>Bristol N2</strain>
    </source>
</reference>